<gene>
    <name type="primary">OR51Q1</name>
</gene>
<name>O51Q1_HUMAN</name>
<dbReference type="EMBL" id="AC087380">
    <property type="status" value="NOT_ANNOTATED_CDS"/>
    <property type="molecule type" value="Genomic_DNA"/>
</dbReference>
<dbReference type="EMBL" id="BC136999">
    <property type="protein sequence ID" value="AAI37000.1"/>
    <property type="molecule type" value="mRNA"/>
</dbReference>
<dbReference type="EMBL" id="AB065531">
    <property type="protein sequence ID" value="BAC05778.1"/>
    <property type="molecule type" value="Genomic_DNA"/>
</dbReference>
<dbReference type="CCDS" id="CCDS31381.1"/>
<dbReference type="RefSeq" id="NP_001004757.1">
    <property type="nucleotide sequence ID" value="NM_001004757.2"/>
</dbReference>
<dbReference type="SMR" id="Q8NH59"/>
<dbReference type="BioGRID" id="133379">
    <property type="interactions" value="2"/>
</dbReference>
<dbReference type="FunCoup" id="Q8NH59">
    <property type="interactions" value="460"/>
</dbReference>
<dbReference type="STRING" id="9606.ENSP00000300778"/>
<dbReference type="GlyCosmos" id="Q8NH59">
    <property type="glycosylation" value="1 site, No reported glycans"/>
</dbReference>
<dbReference type="GlyGen" id="Q8NH59">
    <property type="glycosylation" value="1 site"/>
</dbReference>
<dbReference type="iPTMnet" id="Q8NH59"/>
<dbReference type="PhosphoSitePlus" id="Q8NH59"/>
<dbReference type="BioMuta" id="OR51Q1"/>
<dbReference type="DMDM" id="38258182"/>
<dbReference type="jPOST" id="Q8NH59"/>
<dbReference type="MassIVE" id="Q8NH59"/>
<dbReference type="PaxDb" id="9606-ENSP00000300778"/>
<dbReference type="PeptideAtlas" id="Q8NH59"/>
<dbReference type="Antibodypedia" id="49518">
    <property type="antibodies" value="89 antibodies from 23 providers"/>
</dbReference>
<dbReference type="DNASU" id="390061"/>
<dbReference type="Ensembl" id="ENST00000300778.4">
    <property type="protein sequence ID" value="ENSP00000300778.4"/>
    <property type="gene ID" value="ENSG00000167360.6"/>
</dbReference>
<dbReference type="GeneID" id="390061"/>
<dbReference type="KEGG" id="hsa:390061"/>
<dbReference type="MANE-Select" id="ENST00000300778.4">
    <property type="protein sequence ID" value="ENSP00000300778.4"/>
    <property type="RefSeq nucleotide sequence ID" value="NM_001004757.2"/>
    <property type="RefSeq protein sequence ID" value="NP_001004757.1"/>
</dbReference>
<dbReference type="UCSC" id="uc010qzd.2">
    <property type="organism name" value="human"/>
</dbReference>
<dbReference type="AGR" id="HGNC:14851"/>
<dbReference type="CTD" id="390061"/>
<dbReference type="DisGeNET" id="390061"/>
<dbReference type="GeneCards" id="OR51Q1"/>
<dbReference type="HGNC" id="HGNC:14851">
    <property type="gene designation" value="OR51Q1"/>
</dbReference>
<dbReference type="HPA" id="ENSG00000167360">
    <property type="expression patterns" value="Not detected"/>
</dbReference>
<dbReference type="neXtProt" id="NX_Q8NH59"/>
<dbReference type="PharmGKB" id="PA32388"/>
<dbReference type="VEuPathDB" id="HostDB:ENSG00000167360"/>
<dbReference type="eggNOG" id="ENOG502SMGT">
    <property type="taxonomic scope" value="Eukaryota"/>
</dbReference>
<dbReference type="GeneTree" id="ENSGT01130000278299"/>
<dbReference type="HOGENOM" id="CLU_012526_0_0_1"/>
<dbReference type="InParanoid" id="Q8NH59"/>
<dbReference type="OMA" id="LNSWYGF"/>
<dbReference type="OrthoDB" id="9444602at2759"/>
<dbReference type="PAN-GO" id="Q8NH59">
    <property type="GO annotations" value="2 GO annotations based on evolutionary models"/>
</dbReference>
<dbReference type="PhylomeDB" id="Q8NH59"/>
<dbReference type="TreeFam" id="TF342735"/>
<dbReference type="PathwayCommons" id="Q8NH59"/>
<dbReference type="Reactome" id="R-HSA-9752946">
    <property type="pathway name" value="Expression and translocation of olfactory receptors"/>
</dbReference>
<dbReference type="BioGRID-ORCS" id="390061">
    <property type="hits" value="11 hits in 742 CRISPR screens"/>
</dbReference>
<dbReference type="GeneWiki" id="OR51Q1"/>
<dbReference type="GenomeRNAi" id="390061"/>
<dbReference type="Pharos" id="Q8NH59">
    <property type="development level" value="Tdark"/>
</dbReference>
<dbReference type="PRO" id="PR:Q8NH59"/>
<dbReference type="Proteomes" id="UP000005640">
    <property type="component" value="Chromosome 11"/>
</dbReference>
<dbReference type="RNAct" id="Q8NH59">
    <property type="molecule type" value="protein"/>
</dbReference>
<dbReference type="Bgee" id="ENSG00000167360">
    <property type="expression patterns" value="Expressed in sural nerve and 1 other cell type or tissue"/>
</dbReference>
<dbReference type="GO" id="GO:0005886">
    <property type="term" value="C:plasma membrane"/>
    <property type="evidence" value="ECO:0000318"/>
    <property type="project" value="GO_Central"/>
</dbReference>
<dbReference type="GO" id="GO:0004930">
    <property type="term" value="F:G protein-coupled receptor activity"/>
    <property type="evidence" value="ECO:0007669"/>
    <property type="project" value="UniProtKB-KW"/>
</dbReference>
<dbReference type="GO" id="GO:0004984">
    <property type="term" value="F:olfactory receptor activity"/>
    <property type="evidence" value="ECO:0000318"/>
    <property type="project" value="GO_Central"/>
</dbReference>
<dbReference type="CDD" id="cd15222">
    <property type="entry name" value="7tmA_OR51-like"/>
    <property type="match status" value="1"/>
</dbReference>
<dbReference type="FunFam" id="1.20.1070.10:FF:000002">
    <property type="entry name" value="Olfactory receptor"/>
    <property type="match status" value="1"/>
</dbReference>
<dbReference type="Gene3D" id="1.20.1070.10">
    <property type="entry name" value="Rhodopsin 7-helix transmembrane proteins"/>
    <property type="match status" value="1"/>
</dbReference>
<dbReference type="InterPro" id="IPR000276">
    <property type="entry name" value="GPCR_Rhodpsn"/>
</dbReference>
<dbReference type="InterPro" id="IPR017452">
    <property type="entry name" value="GPCR_Rhodpsn_7TM"/>
</dbReference>
<dbReference type="InterPro" id="IPR000725">
    <property type="entry name" value="Olfact_rcpt"/>
</dbReference>
<dbReference type="InterPro" id="IPR050402">
    <property type="entry name" value="OR51/52/56-like"/>
</dbReference>
<dbReference type="PANTHER" id="PTHR26450:SF84">
    <property type="entry name" value="OLFACTORY RECEPTOR 51Q1"/>
    <property type="match status" value="1"/>
</dbReference>
<dbReference type="PANTHER" id="PTHR26450">
    <property type="entry name" value="OLFACTORY RECEPTOR 56B1-RELATED"/>
    <property type="match status" value="1"/>
</dbReference>
<dbReference type="Pfam" id="PF13853">
    <property type="entry name" value="7tm_4"/>
    <property type="match status" value="1"/>
</dbReference>
<dbReference type="PRINTS" id="PR00237">
    <property type="entry name" value="GPCRRHODOPSN"/>
</dbReference>
<dbReference type="PRINTS" id="PR00245">
    <property type="entry name" value="OLFACTORYR"/>
</dbReference>
<dbReference type="SUPFAM" id="SSF81321">
    <property type="entry name" value="Family A G protein-coupled receptor-like"/>
    <property type="match status" value="1"/>
</dbReference>
<dbReference type="PROSITE" id="PS50262">
    <property type="entry name" value="G_PROTEIN_RECEP_F1_2"/>
    <property type="match status" value="1"/>
</dbReference>
<sequence length="317" mass="35747">MSQVTNTTQEGIYFILTDIPGFEASHIWISIPVCCLYTISIMGNTTILTVIRTEPSVHQRMYLFLSMLALTDLGLTLTTLPTVMQLLWFNVRRISSEACFAQFFFLHGFSFMESSVLLAMSVDCYVAICCPLHYASILTNEVIGRTGLAIICCCVLAVLPSLFLLKRLPFCHSHLLSRSYCLHQDMIRLVCADIRLNSWYGFALALLIIIVDPLLIVISYTLILKNILGTATWAERLRALNNCLSHILAVLVLYIPMVGVSMTHRFAKHASPLVHVIMANIYLLAPPVMNPIIYSVKNKQIQWGMLNFLSLKNMHSR</sequence>
<evidence type="ECO:0000255" key="1"/>
<evidence type="ECO:0000255" key="2">
    <source>
        <dbReference type="PROSITE-ProRule" id="PRU00521"/>
    </source>
</evidence>
<evidence type="ECO:0000269" key="3">
    <source ref="3"/>
</evidence>
<evidence type="ECO:0000305" key="4"/>
<protein>
    <recommendedName>
        <fullName>Olfactory receptor 51Q1</fullName>
    </recommendedName>
</protein>
<feature type="chain" id="PRO_0000150761" description="Olfactory receptor 51Q1">
    <location>
        <begin position="1"/>
        <end position="317"/>
    </location>
</feature>
<feature type="topological domain" description="Extracellular" evidence="1">
    <location>
        <begin position="1"/>
        <end position="27"/>
    </location>
</feature>
<feature type="transmembrane region" description="Helical; Name=1" evidence="1">
    <location>
        <begin position="28"/>
        <end position="48"/>
    </location>
</feature>
<feature type="topological domain" description="Cytoplasmic" evidence="1">
    <location>
        <begin position="49"/>
        <end position="56"/>
    </location>
</feature>
<feature type="transmembrane region" description="Helical; Name=2" evidence="1">
    <location>
        <begin position="57"/>
        <end position="77"/>
    </location>
</feature>
<feature type="topological domain" description="Extracellular" evidence="1">
    <location>
        <begin position="78"/>
        <end position="101"/>
    </location>
</feature>
<feature type="transmembrane region" description="Helical; Name=3" evidence="1">
    <location>
        <begin position="102"/>
        <end position="122"/>
    </location>
</feature>
<feature type="topological domain" description="Cytoplasmic" evidence="1">
    <location>
        <begin position="123"/>
        <end position="141"/>
    </location>
</feature>
<feature type="transmembrane region" description="Helical; Name=4" evidence="1">
    <location>
        <begin position="142"/>
        <end position="162"/>
    </location>
</feature>
<feature type="topological domain" description="Extracellular" evidence="1">
    <location>
        <begin position="163"/>
        <end position="198"/>
    </location>
</feature>
<feature type="transmembrane region" description="Helical; Name=5" evidence="1">
    <location>
        <begin position="199"/>
        <end position="219"/>
    </location>
</feature>
<feature type="topological domain" description="Cytoplasmic" evidence="1">
    <location>
        <begin position="220"/>
        <end position="239"/>
    </location>
</feature>
<feature type="transmembrane region" description="Helical; Name=6" evidence="1">
    <location>
        <begin position="240"/>
        <end position="260"/>
    </location>
</feature>
<feature type="topological domain" description="Extracellular" evidence="1">
    <location>
        <begin position="261"/>
        <end position="275"/>
    </location>
</feature>
<feature type="transmembrane region" description="Helical; Name=7" evidence="1">
    <location>
        <begin position="276"/>
        <end position="296"/>
    </location>
</feature>
<feature type="topological domain" description="Cytoplasmic" evidence="1">
    <location>
        <begin position="297"/>
        <end position="317"/>
    </location>
</feature>
<feature type="glycosylation site" description="N-linked (GlcNAc...) asparagine" evidence="1">
    <location>
        <position position="6"/>
    </location>
</feature>
<feature type="disulfide bond" evidence="2">
    <location>
        <begin position="99"/>
        <end position="191"/>
    </location>
</feature>
<feature type="sequence variant" id="VAR_034326" description="In dbSNP:rs10838092." evidence="3">
    <original>T</original>
    <variation>I</variation>
    <location>
        <position position="146"/>
    </location>
</feature>
<feature type="sequence variant" id="VAR_034327" description="In dbSNP:rs10838093.">
    <original>C</original>
    <variation>R</variation>
    <location>
        <position position="153"/>
    </location>
</feature>
<feature type="sequence variant" id="VAR_053329" description="In dbSNP:rs10838094.">
    <original>V</original>
    <variation>I</variation>
    <location>
        <position position="155"/>
    </location>
</feature>
<feature type="sequence variant" id="VAR_034328" description="In dbSNP:rs10838095." evidence="3">
    <original>R</original>
    <variation>H</variation>
    <location>
        <position position="178"/>
    </location>
</feature>
<feature type="sequence variant" id="VAR_024144" description="In dbSNP:rs2736586.">
    <original>V</original>
    <variation>M</variation>
    <location>
        <position position="211"/>
    </location>
</feature>
<feature type="sequence variant" id="VAR_053330" description="In dbSNP:rs2647573.">
    <original>F</original>
    <variation>S</variation>
    <location>
        <position position="308"/>
    </location>
</feature>
<feature type="sequence conflict" description="In Ref. 3; BAC05778." evidence="4" ref="3">
    <original>CCV</original>
    <variation>RCI</variation>
    <location>
        <begin position="153"/>
        <end position="155"/>
    </location>
</feature>
<accession>Q8NH59</accession>
<accession>B2RNN1</accession>
<proteinExistence type="evidence at transcript level"/>
<organism>
    <name type="scientific">Homo sapiens</name>
    <name type="common">Human</name>
    <dbReference type="NCBI Taxonomy" id="9606"/>
    <lineage>
        <taxon>Eukaryota</taxon>
        <taxon>Metazoa</taxon>
        <taxon>Chordata</taxon>
        <taxon>Craniata</taxon>
        <taxon>Vertebrata</taxon>
        <taxon>Euteleostomi</taxon>
        <taxon>Mammalia</taxon>
        <taxon>Eutheria</taxon>
        <taxon>Euarchontoglires</taxon>
        <taxon>Primates</taxon>
        <taxon>Haplorrhini</taxon>
        <taxon>Catarrhini</taxon>
        <taxon>Hominidae</taxon>
        <taxon>Homo</taxon>
    </lineage>
</organism>
<keyword id="KW-1003">Cell membrane</keyword>
<keyword id="KW-1015">Disulfide bond</keyword>
<keyword id="KW-0297">G-protein coupled receptor</keyword>
<keyword id="KW-0325">Glycoprotein</keyword>
<keyword id="KW-0472">Membrane</keyword>
<keyword id="KW-0552">Olfaction</keyword>
<keyword id="KW-0675">Receptor</keyword>
<keyword id="KW-1185">Reference proteome</keyword>
<keyword id="KW-0716">Sensory transduction</keyword>
<keyword id="KW-0807">Transducer</keyword>
<keyword id="KW-0812">Transmembrane</keyword>
<keyword id="KW-1133">Transmembrane helix</keyword>
<comment type="function">
    <text evidence="4">Odorant receptor.</text>
</comment>
<comment type="subcellular location">
    <subcellularLocation>
        <location>Cell membrane</location>
        <topology>Multi-pass membrane protein</topology>
    </subcellularLocation>
</comment>
<comment type="polymorphism">
    <text>A stop codon at position Arg-236 in the gene coding for this protein is responsible for functional diversity thus producing a pseudogene.</text>
</comment>
<comment type="similarity">
    <text evidence="2">Belongs to the G-protein coupled receptor 1 family.</text>
</comment>
<comment type="online information" name="Human Olfactory Receptor Data Exploratorium (HORDE)">
    <link uri="http://genome.weizmann.ac.il/horde/card/index/symbol:OR51Q1"/>
</comment>
<reference key="1">
    <citation type="journal article" date="2006" name="Nature">
        <title>Human chromosome 11 DNA sequence and analysis including novel gene identification.</title>
        <authorList>
            <person name="Taylor T.D."/>
            <person name="Noguchi H."/>
            <person name="Totoki Y."/>
            <person name="Toyoda A."/>
            <person name="Kuroki Y."/>
            <person name="Dewar K."/>
            <person name="Lloyd C."/>
            <person name="Itoh T."/>
            <person name="Takeda T."/>
            <person name="Kim D.-W."/>
            <person name="She X."/>
            <person name="Barlow K.F."/>
            <person name="Bloom T."/>
            <person name="Bruford E."/>
            <person name="Chang J.L."/>
            <person name="Cuomo C.A."/>
            <person name="Eichler E."/>
            <person name="FitzGerald M.G."/>
            <person name="Jaffe D.B."/>
            <person name="LaButti K."/>
            <person name="Nicol R."/>
            <person name="Park H.-S."/>
            <person name="Seaman C."/>
            <person name="Sougnez C."/>
            <person name="Yang X."/>
            <person name="Zimmer A.R."/>
            <person name="Zody M.C."/>
            <person name="Birren B.W."/>
            <person name="Nusbaum C."/>
            <person name="Fujiyama A."/>
            <person name="Hattori M."/>
            <person name="Rogers J."/>
            <person name="Lander E.S."/>
            <person name="Sakaki Y."/>
        </authorList>
    </citation>
    <scope>NUCLEOTIDE SEQUENCE [LARGE SCALE GENOMIC DNA]</scope>
</reference>
<reference key="2">
    <citation type="journal article" date="2004" name="Genome Res.">
        <title>The status, quality, and expansion of the NIH full-length cDNA project: the Mammalian Gene Collection (MGC).</title>
        <authorList>
            <consortium name="The MGC Project Team"/>
        </authorList>
    </citation>
    <scope>NUCLEOTIDE SEQUENCE [LARGE SCALE MRNA]</scope>
</reference>
<reference key="3">
    <citation type="submission" date="2001-07" db="EMBL/GenBank/DDBJ databases">
        <title>Genome-wide discovery and analysis of human seven transmembrane helix receptor genes.</title>
        <authorList>
            <person name="Suwa M."/>
            <person name="Sato T."/>
            <person name="Okouchi I."/>
            <person name="Arita M."/>
            <person name="Futami K."/>
            <person name="Matsumoto S."/>
            <person name="Tsutsumi S."/>
            <person name="Aburatani H."/>
            <person name="Asai K."/>
            <person name="Akiyama Y."/>
        </authorList>
    </citation>
    <scope>NUCLEOTIDE SEQUENCE [GENOMIC DNA] OF 1-303</scope>
    <scope>VARIANTS ILE-146 AND HIS-178</scope>
</reference>
<reference key="4">
    <citation type="journal article" date="2007" name="PLoS Biol.">
        <title>Genetic elucidation of human hyperosmia to isovaleric acid.</title>
        <authorList>
            <person name="Menashe I."/>
            <person name="Abaffy T."/>
            <person name="Hasin Y."/>
            <person name="Goshen S."/>
            <person name="Yahalom V."/>
            <person name="Luetje C.W."/>
            <person name="Lancet D."/>
        </authorList>
    </citation>
    <scope>POLYMORPHISM</scope>
</reference>